<reference key="1">
    <citation type="journal article" date="1997" name="Mol. Biol. Evol.">
        <title>The complete mitochondrial genome of Alligator mississippiensis and the separation between recent archosauria (birds and crocodiles).</title>
        <authorList>
            <person name="Janke A."/>
            <person name="Arnason U."/>
        </authorList>
    </citation>
    <scope>NUCLEOTIDE SEQUENCE [GENOMIC DNA]</scope>
    <source>
        <tissue>Liver</tissue>
    </source>
</reference>
<reference key="2">
    <citation type="submission" date="1998-06" db="EMBL/GenBank/DDBJ databases">
        <title>Primers for a PCR-based approach to complete mitochondrial genome sequencing.</title>
        <authorList>
            <person name="Sorenson M.D."/>
            <person name="Dimcheff D.E."/>
            <person name="Ast J.C."/>
            <person name="Yuri T."/>
            <person name="Mindell D.P."/>
        </authorList>
    </citation>
    <scope>NUCLEOTIDE SEQUENCE [GENOMIC DNA]</scope>
</reference>
<proteinExistence type="inferred from homology"/>
<name>COX2_ALLMI</name>
<accession>O47870</accession>
<sequence length="229" mass="26269">MANPTHLGFQDAMSPLMEELLYFHDHTLMILFLISSLVFYMIFALLFPKLYYPNTSDVQEVEVIWTVLPAIVLISIALPSLRTLYLMDETNNPCLTIKVTGHQWYWSYEYTDFSTLEFDSYMIPTQDLPQGHFRLLEVDHRMITPTNSTIRVLITAEDVLHSWAIPSIGTKMDAVPGRLNQVMITLANPGVFYGQCSEICGANHSFMPITMETIPLNHFQLWLEDSILS</sequence>
<comment type="function">
    <text evidence="2">Component of the cytochrome c oxidase, the last enzyme in the mitochondrial electron transport chain which drives oxidative phosphorylation. The respiratory chain contains 3 multisubunit complexes succinate dehydrogenase (complex II, CII), ubiquinol-cytochrome c oxidoreductase (cytochrome b-c1 complex, complex III, CIII) and cytochrome c oxidase (complex IV, CIV), that cooperate to transfer electrons derived from NADH and succinate to molecular oxygen, creating an electrochemical gradient over the inner membrane that drives transmembrane transport and the ATP synthase. Cytochrome c oxidase is the component of the respiratory chain that catalyzes the reduction of oxygen to water. Electrons originating from reduced cytochrome c in the intermembrane space (IMS) are transferred via the dinuclear copper A center (CU(A)) of subunit 2 and heme A of subunit 1 to the active site in subunit 1, a binuclear center (BNC) formed by heme A3 and copper B (CU(B)). The BNC reduces molecular oxygen to 2 water molecules using 4 electrons from cytochrome c in the IMS and 4 protons from the mitochondrial matrix.</text>
</comment>
<comment type="catalytic activity">
    <reaction evidence="2">
        <text>4 Fe(II)-[cytochrome c] + O2 + 8 H(+)(in) = 4 Fe(III)-[cytochrome c] + 2 H2O + 4 H(+)(out)</text>
        <dbReference type="Rhea" id="RHEA:11436"/>
        <dbReference type="Rhea" id="RHEA-COMP:10350"/>
        <dbReference type="Rhea" id="RHEA-COMP:14399"/>
        <dbReference type="ChEBI" id="CHEBI:15377"/>
        <dbReference type="ChEBI" id="CHEBI:15378"/>
        <dbReference type="ChEBI" id="CHEBI:15379"/>
        <dbReference type="ChEBI" id="CHEBI:29033"/>
        <dbReference type="ChEBI" id="CHEBI:29034"/>
        <dbReference type="EC" id="7.1.1.9"/>
    </reaction>
    <physiologicalReaction direction="left-to-right" evidence="2">
        <dbReference type="Rhea" id="RHEA:11437"/>
    </physiologicalReaction>
</comment>
<comment type="cofactor">
    <cofactor evidence="3">
        <name>Cu cation</name>
        <dbReference type="ChEBI" id="CHEBI:23378"/>
    </cofactor>
    <text evidence="3">Binds a dinuclear copper A center per subunit.</text>
</comment>
<comment type="subunit">
    <text evidence="1 3">Component of the cytochrome c oxidase (complex IV, CIV), a multisubunit enzyme composed of 14 subunits. The complex is composed of a catalytic core of 3 subunits MT-CO1, MT-CO2 and MT-CO3, encoded in the mitochondrial DNA, and 11 supernumerary subunits COX4I, COX5A, COX5B, COX6A, COX6B, COX6C, COX7A, COX7B, COX7C, COX8 and NDUFA4, which are encoded in the nuclear genome. The complex exists as a monomer or a dimer and forms supercomplexes (SCs) in the inner mitochondrial membrane with NADH-ubiquinone oxidoreductase (complex I, CI) and ubiquinol-cytochrome c oxidoreductase (cytochrome b-c1 complex, complex III, CIII), resulting in different assemblies (supercomplex SCI(1)III(2)IV(1) and megacomplex MCI(2)III(2)IV(2)) (By similarity). Found in a complex with TMEM177, COA6, COX18, COX20, SCO1 and SCO2. Interacts with TMEM177 in a COX20-dependent manner. Interacts with COX20. Interacts with COX16 (By similarity).</text>
</comment>
<comment type="subcellular location">
    <subcellularLocation>
        <location evidence="3">Mitochondrion inner membrane</location>
        <topology evidence="3">Multi-pass membrane protein</topology>
    </subcellularLocation>
</comment>
<comment type="similarity">
    <text evidence="4">Belongs to the cytochrome c oxidase subunit 2 family.</text>
</comment>
<feature type="chain" id="PRO_0000183489" description="Cytochrome c oxidase subunit 2">
    <location>
        <begin position="1"/>
        <end position="229"/>
    </location>
</feature>
<feature type="topological domain" description="Mitochondrial intermembrane" evidence="3">
    <location>
        <begin position="1"/>
        <end position="14"/>
    </location>
</feature>
<feature type="transmembrane region" description="Helical; Name=I" evidence="3">
    <location>
        <begin position="15"/>
        <end position="45"/>
    </location>
</feature>
<feature type="topological domain" description="Mitochondrial matrix" evidence="3">
    <location>
        <begin position="46"/>
        <end position="59"/>
    </location>
</feature>
<feature type="transmembrane region" description="Helical; Name=II" evidence="3">
    <location>
        <begin position="60"/>
        <end position="87"/>
    </location>
</feature>
<feature type="topological domain" description="Mitochondrial intermembrane" evidence="3">
    <location>
        <begin position="88"/>
        <end position="229"/>
    </location>
</feature>
<feature type="binding site" evidence="3">
    <location>
        <position position="161"/>
    </location>
    <ligand>
        <name>Cu cation</name>
        <dbReference type="ChEBI" id="CHEBI:23378"/>
        <label>A1</label>
    </ligand>
</feature>
<feature type="binding site" evidence="3">
    <location>
        <position position="196"/>
    </location>
    <ligand>
        <name>Cu cation</name>
        <dbReference type="ChEBI" id="CHEBI:23378"/>
        <label>A1</label>
    </ligand>
</feature>
<feature type="binding site" evidence="3">
    <location>
        <position position="196"/>
    </location>
    <ligand>
        <name>Cu cation</name>
        <dbReference type="ChEBI" id="CHEBI:23378"/>
        <label>A2</label>
    </ligand>
</feature>
<feature type="binding site" evidence="3">
    <location>
        <position position="198"/>
    </location>
    <ligand>
        <name>Cu cation</name>
        <dbReference type="ChEBI" id="CHEBI:23378"/>
        <label>A2</label>
    </ligand>
</feature>
<feature type="binding site" evidence="3">
    <location>
        <position position="198"/>
    </location>
    <ligand>
        <name>Mg(2+)</name>
        <dbReference type="ChEBI" id="CHEBI:18420"/>
        <note>ligand shared with MT-CO1</note>
    </ligand>
</feature>
<feature type="binding site" evidence="3">
    <location>
        <position position="200"/>
    </location>
    <ligand>
        <name>Cu cation</name>
        <dbReference type="ChEBI" id="CHEBI:23378"/>
        <label>A1</label>
    </ligand>
</feature>
<feature type="binding site" evidence="3">
    <location>
        <position position="200"/>
    </location>
    <ligand>
        <name>Cu cation</name>
        <dbReference type="ChEBI" id="CHEBI:23378"/>
        <label>A2</label>
    </ligand>
</feature>
<feature type="binding site" evidence="3">
    <location>
        <position position="204"/>
    </location>
    <ligand>
        <name>Cu cation</name>
        <dbReference type="ChEBI" id="CHEBI:23378"/>
        <label>A2</label>
    </ligand>
</feature>
<feature type="binding site" evidence="3">
    <location>
        <position position="207"/>
    </location>
    <ligand>
        <name>Cu cation</name>
        <dbReference type="ChEBI" id="CHEBI:23378"/>
        <label>A1</label>
    </ligand>
</feature>
<protein>
    <recommendedName>
        <fullName>Cytochrome c oxidase subunit 2</fullName>
        <ecNumber>7.1.1.9</ecNumber>
    </recommendedName>
    <alternativeName>
        <fullName>Cytochrome c oxidase polypeptide II</fullName>
    </alternativeName>
</protein>
<gene>
    <name type="primary">MT-CO2</name>
    <name type="synonym">COII</name>
    <name type="synonym">COXII</name>
    <name type="synonym">MTCO2</name>
</gene>
<evidence type="ECO:0000250" key="1">
    <source>
        <dbReference type="UniProtKB" id="P00403"/>
    </source>
</evidence>
<evidence type="ECO:0000250" key="2">
    <source>
        <dbReference type="UniProtKB" id="P00410"/>
    </source>
</evidence>
<evidence type="ECO:0000250" key="3">
    <source>
        <dbReference type="UniProtKB" id="P68530"/>
    </source>
</evidence>
<evidence type="ECO:0000305" key="4"/>
<keyword id="KW-0186">Copper</keyword>
<keyword id="KW-0249">Electron transport</keyword>
<keyword id="KW-0460">Magnesium</keyword>
<keyword id="KW-0472">Membrane</keyword>
<keyword id="KW-0479">Metal-binding</keyword>
<keyword id="KW-0496">Mitochondrion</keyword>
<keyword id="KW-0999">Mitochondrion inner membrane</keyword>
<keyword id="KW-0679">Respiratory chain</keyword>
<keyword id="KW-1278">Translocase</keyword>
<keyword id="KW-0812">Transmembrane</keyword>
<keyword id="KW-1133">Transmembrane helix</keyword>
<keyword id="KW-0813">Transport</keyword>
<geneLocation type="mitochondrion"/>
<dbReference type="EC" id="7.1.1.9"/>
<dbReference type="EMBL" id="Y13113">
    <property type="protein sequence ID" value="CAA73564.1"/>
    <property type="molecule type" value="Genomic_DNA"/>
</dbReference>
<dbReference type="EMBL" id="AF069428">
    <property type="protein sequence ID" value="AAD09983.1"/>
    <property type="molecule type" value="Genomic_DNA"/>
</dbReference>
<dbReference type="PIR" id="T11277">
    <property type="entry name" value="T11277"/>
</dbReference>
<dbReference type="SMR" id="O47870"/>
<dbReference type="KEGG" id="amj:808245"/>
<dbReference type="CTD" id="4513"/>
<dbReference type="OrthoDB" id="539285at2759"/>
<dbReference type="GO" id="GO:0005743">
    <property type="term" value="C:mitochondrial inner membrane"/>
    <property type="evidence" value="ECO:0007669"/>
    <property type="project" value="UniProtKB-SubCell"/>
</dbReference>
<dbReference type="GO" id="GO:0045277">
    <property type="term" value="C:respiratory chain complex IV"/>
    <property type="evidence" value="ECO:0000250"/>
    <property type="project" value="UniProtKB"/>
</dbReference>
<dbReference type="GO" id="GO:0005507">
    <property type="term" value="F:copper ion binding"/>
    <property type="evidence" value="ECO:0007669"/>
    <property type="project" value="InterPro"/>
</dbReference>
<dbReference type="GO" id="GO:0004129">
    <property type="term" value="F:cytochrome-c oxidase activity"/>
    <property type="evidence" value="ECO:0007669"/>
    <property type="project" value="UniProtKB-EC"/>
</dbReference>
<dbReference type="GO" id="GO:0042773">
    <property type="term" value="P:ATP synthesis coupled electron transport"/>
    <property type="evidence" value="ECO:0007669"/>
    <property type="project" value="TreeGrafter"/>
</dbReference>
<dbReference type="CDD" id="cd13912">
    <property type="entry name" value="CcO_II_C"/>
    <property type="match status" value="1"/>
</dbReference>
<dbReference type="FunFam" id="1.10.287.90:FF:000001">
    <property type="entry name" value="Cytochrome c oxidase subunit 2"/>
    <property type="match status" value="1"/>
</dbReference>
<dbReference type="FunFam" id="2.60.40.420:FF:000001">
    <property type="entry name" value="Cytochrome c oxidase subunit 2"/>
    <property type="match status" value="1"/>
</dbReference>
<dbReference type="Gene3D" id="1.10.287.90">
    <property type="match status" value="1"/>
</dbReference>
<dbReference type="Gene3D" id="2.60.40.420">
    <property type="entry name" value="Cupredoxins - blue copper proteins"/>
    <property type="match status" value="1"/>
</dbReference>
<dbReference type="InterPro" id="IPR045187">
    <property type="entry name" value="CcO_II"/>
</dbReference>
<dbReference type="InterPro" id="IPR002429">
    <property type="entry name" value="CcO_II-like_C"/>
</dbReference>
<dbReference type="InterPro" id="IPR034210">
    <property type="entry name" value="CcO_II_C"/>
</dbReference>
<dbReference type="InterPro" id="IPR001505">
    <property type="entry name" value="Copper_CuA"/>
</dbReference>
<dbReference type="InterPro" id="IPR008972">
    <property type="entry name" value="Cupredoxin"/>
</dbReference>
<dbReference type="InterPro" id="IPR014222">
    <property type="entry name" value="Cyt_c_oxidase_su2"/>
</dbReference>
<dbReference type="InterPro" id="IPR011759">
    <property type="entry name" value="Cyt_c_oxidase_su2_TM_dom"/>
</dbReference>
<dbReference type="InterPro" id="IPR036257">
    <property type="entry name" value="Cyt_c_oxidase_su2_TM_sf"/>
</dbReference>
<dbReference type="NCBIfam" id="TIGR02866">
    <property type="entry name" value="CoxB"/>
    <property type="match status" value="1"/>
</dbReference>
<dbReference type="PANTHER" id="PTHR22888:SF9">
    <property type="entry name" value="CYTOCHROME C OXIDASE SUBUNIT 2"/>
    <property type="match status" value="1"/>
</dbReference>
<dbReference type="PANTHER" id="PTHR22888">
    <property type="entry name" value="CYTOCHROME C OXIDASE, SUBUNIT II"/>
    <property type="match status" value="1"/>
</dbReference>
<dbReference type="Pfam" id="PF00116">
    <property type="entry name" value="COX2"/>
    <property type="match status" value="1"/>
</dbReference>
<dbReference type="Pfam" id="PF02790">
    <property type="entry name" value="COX2_TM"/>
    <property type="match status" value="1"/>
</dbReference>
<dbReference type="PRINTS" id="PR01166">
    <property type="entry name" value="CYCOXIDASEII"/>
</dbReference>
<dbReference type="SUPFAM" id="SSF49503">
    <property type="entry name" value="Cupredoxins"/>
    <property type="match status" value="1"/>
</dbReference>
<dbReference type="SUPFAM" id="SSF81464">
    <property type="entry name" value="Cytochrome c oxidase subunit II-like, transmembrane region"/>
    <property type="match status" value="1"/>
</dbReference>
<dbReference type="PROSITE" id="PS00078">
    <property type="entry name" value="COX2"/>
    <property type="match status" value="1"/>
</dbReference>
<dbReference type="PROSITE" id="PS50857">
    <property type="entry name" value="COX2_CUA"/>
    <property type="match status" value="1"/>
</dbReference>
<dbReference type="PROSITE" id="PS50999">
    <property type="entry name" value="COX2_TM"/>
    <property type="match status" value="1"/>
</dbReference>
<organism>
    <name type="scientific">Alligator mississippiensis</name>
    <name type="common">American alligator</name>
    <dbReference type="NCBI Taxonomy" id="8496"/>
    <lineage>
        <taxon>Eukaryota</taxon>
        <taxon>Metazoa</taxon>
        <taxon>Chordata</taxon>
        <taxon>Craniata</taxon>
        <taxon>Vertebrata</taxon>
        <taxon>Euteleostomi</taxon>
        <taxon>Archelosauria</taxon>
        <taxon>Archosauria</taxon>
        <taxon>Crocodylia</taxon>
        <taxon>Alligatoridae</taxon>
        <taxon>Alligatorinae</taxon>
        <taxon>Alligator</taxon>
    </lineage>
</organism>